<accession>B2GD90</accession>
<dbReference type="EMBL" id="AP008937">
    <property type="protein sequence ID" value="BAG27622.1"/>
    <property type="molecule type" value="Genomic_DNA"/>
</dbReference>
<dbReference type="RefSeq" id="WP_003683757.1">
    <property type="nucleotide sequence ID" value="NC_010610.1"/>
</dbReference>
<dbReference type="SMR" id="B2GD90"/>
<dbReference type="GeneID" id="83714265"/>
<dbReference type="KEGG" id="lfe:LAF_1286"/>
<dbReference type="eggNOG" id="COG0782">
    <property type="taxonomic scope" value="Bacteria"/>
</dbReference>
<dbReference type="HOGENOM" id="CLU_101379_2_1_9"/>
<dbReference type="Proteomes" id="UP000001697">
    <property type="component" value="Chromosome"/>
</dbReference>
<dbReference type="GO" id="GO:0003677">
    <property type="term" value="F:DNA binding"/>
    <property type="evidence" value="ECO:0007669"/>
    <property type="project" value="UniProtKB-UniRule"/>
</dbReference>
<dbReference type="GO" id="GO:0070063">
    <property type="term" value="F:RNA polymerase binding"/>
    <property type="evidence" value="ECO:0007669"/>
    <property type="project" value="InterPro"/>
</dbReference>
<dbReference type="GO" id="GO:0006354">
    <property type="term" value="P:DNA-templated transcription elongation"/>
    <property type="evidence" value="ECO:0007669"/>
    <property type="project" value="TreeGrafter"/>
</dbReference>
<dbReference type="GO" id="GO:0032784">
    <property type="term" value="P:regulation of DNA-templated transcription elongation"/>
    <property type="evidence" value="ECO:0007669"/>
    <property type="project" value="UniProtKB-UniRule"/>
</dbReference>
<dbReference type="FunFam" id="1.10.287.180:FF:000001">
    <property type="entry name" value="Transcription elongation factor GreA"/>
    <property type="match status" value="1"/>
</dbReference>
<dbReference type="FunFam" id="3.10.50.30:FF:000001">
    <property type="entry name" value="Transcription elongation factor GreA"/>
    <property type="match status" value="1"/>
</dbReference>
<dbReference type="Gene3D" id="3.10.50.30">
    <property type="entry name" value="Transcription elongation factor, GreA/GreB, C-terminal domain"/>
    <property type="match status" value="1"/>
</dbReference>
<dbReference type="Gene3D" id="1.10.287.180">
    <property type="entry name" value="Transcription elongation factor, GreA/GreB, N-terminal domain"/>
    <property type="match status" value="1"/>
</dbReference>
<dbReference type="HAMAP" id="MF_00105">
    <property type="entry name" value="GreA_GreB"/>
    <property type="match status" value="1"/>
</dbReference>
<dbReference type="InterPro" id="IPR036953">
    <property type="entry name" value="GreA/GreB_C_sf"/>
</dbReference>
<dbReference type="InterPro" id="IPR018151">
    <property type="entry name" value="TF_GreA/GreB_CS"/>
</dbReference>
<dbReference type="InterPro" id="IPR006359">
    <property type="entry name" value="Tscrpt_elong_fac_GreA"/>
</dbReference>
<dbReference type="InterPro" id="IPR028624">
    <property type="entry name" value="Tscrpt_elong_fac_GreA/B"/>
</dbReference>
<dbReference type="InterPro" id="IPR001437">
    <property type="entry name" value="Tscrpt_elong_fac_GreA/B_C"/>
</dbReference>
<dbReference type="InterPro" id="IPR023459">
    <property type="entry name" value="Tscrpt_elong_fac_GreA/B_fam"/>
</dbReference>
<dbReference type="InterPro" id="IPR022691">
    <property type="entry name" value="Tscrpt_elong_fac_GreA/B_N"/>
</dbReference>
<dbReference type="InterPro" id="IPR036805">
    <property type="entry name" value="Tscrpt_elong_fac_GreA/B_N_sf"/>
</dbReference>
<dbReference type="NCBIfam" id="TIGR01462">
    <property type="entry name" value="greA"/>
    <property type="match status" value="1"/>
</dbReference>
<dbReference type="NCBIfam" id="NF001260">
    <property type="entry name" value="PRK00226.1-1"/>
    <property type="match status" value="1"/>
</dbReference>
<dbReference type="NCBIfam" id="NF001261">
    <property type="entry name" value="PRK00226.1-2"/>
    <property type="match status" value="1"/>
</dbReference>
<dbReference type="NCBIfam" id="NF001263">
    <property type="entry name" value="PRK00226.1-4"/>
    <property type="match status" value="1"/>
</dbReference>
<dbReference type="PANTHER" id="PTHR30437">
    <property type="entry name" value="TRANSCRIPTION ELONGATION FACTOR GREA"/>
    <property type="match status" value="1"/>
</dbReference>
<dbReference type="PANTHER" id="PTHR30437:SF4">
    <property type="entry name" value="TRANSCRIPTION ELONGATION FACTOR GREA"/>
    <property type="match status" value="1"/>
</dbReference>
<dbReference type="Pfam" id="PF01272">
    <property type="entry name" value="GreA_GreB"/>
    <property type="match status" value="1"/>
</dbReference>
<dbReference type="Pfam" id="PF03449">
    <property type="entry name" value="GreA_GreB_N"/>
    <property type="match status" value="1"/>
</dbReference>
<dbReference type="PIRSF" id="PIRSF006092">
    <property type="entry name" value="GreA_GreB"/>
    <property type="match status" value="1"/>
</dbReference>
<dbReference type="SUPFAM" id="SSF54534">
    <property type="entry name" value="FKBP-like"/>
    <property type="match status" value="1"/>
</dbReference>
<dbReference type="SUPFAM" id="SSF46557">
    <property type="entry name" value="GreA transcript cleavage protein, N-terminal domain"/>
    <property type="match status" value="1"/>
</dbReference>
<dbReference type="PROSITE" id="PS00829">
    <property type="entry name" value="GREAB_1"/>
    <property type="match status" value="1"/>
</dbReference>
<dbReference type="PROSITE" id="PS00830">
    <property type="entry name" value="GREAB_2"/>
    <property type="match status" value="1"/>
</dbReference>
<reference key="1">
    <citation type="journal article" date="2008" name="DNA Res.">
        <title>Comparative genome analysis of Lactobacillus reuteri and Lactobacillus fermentum reveal a genomic island for reuterin and cobalamin production.</title>
        <authorList>
            <person name="Morita H."/>
            <person name="Toh H."/>
            <person name="Fukuda S."/>
            <person name="Horikawa H."/>
            <person name="Oshima K."/>
            <person name="Suzuki T."/>
            <person name="Murakami M."/>
            <person name="Hisamatsu S."/>
            <person name="Kato Y."/>
            <person name="Takizawa T."/>
            <person name="Fukuoka H."/>
            <person name="Yoshimura T."/>
            <person name="Itoh K."/>
            <person name="O'Sullivan D.J."/>
            <person name="McKay L.L."/>
            <person name="Ohno H."/>
            <person name="Kikuchi J."/>
            <person name="Masaoka T."/>
            <person name="Hattori M."/>
        </authorList>
    </citation>
    <scope>NUCLEOTIDE SEQUENCE [LARGE SCALE GENOMIC DNA]</scope>
    <source>
        <strain>NBRC 3956 / LMG 18251</strain>
    </source>
</reference>
<feature type="chain" id="PRO_1000094174" description="Transcription elongation factor GreA">
    <location>
        <begin position="1"/>
        <end position="158"/>
    </location>
</feature>
<feature type="region of interest" description="Disordered" evidence="2">
    <location>
        <begin position="102"/>
        <end position="125"/>
    </location>
</feature>
<feature type="coiled-coil region" evidence="1">
    <location>
        <begin position="49"/>
        <end position="69"/>
    </location>
</feature>
<organism>
    <name type="scientific">Limosilactobacillus fermentum (strain NBRC 3956 / LMG 18251)</name>
    <name type="common">Lactobacillus fermentum</name>
    <dbReference type="NCBI Taxonomy" id="334390"/>
    <lineage>
        <taxon>Bacteria</taxon>
        <taxon>Bacillati</taxon>
        <taxon>Bacillota</taxon>
        <taxon>Bacilli</taxon>
        <taxon>Lactobacillales</taxon>
        <taxon>Lactobacillaceae</taxon>
        <taxon>Limosilactobacillus</taxon>
    </lineage>
</organism>
<proteinExistence type="inferred from homology"/>
<sequence>MAEEKSFPMTADGKAKLEQELEDLRLVRRPEVINRIKIARSYGDLSENSEYESAKDEQAFVEGRISQIETMLQYAVIIDNEDVAADEVSMGREITFQELPDEEPESYTIVGESESDPLSGKISNESPMAKGLLGHKVGDTVEIEIPNGSMKVKILSVK</sequence>
<name>GREA_LIMF3</name>
<keyword id="KW-0175">Coiled coil</keyword>
<keyword id="KW-0238">DNA-binding</keyword>
<keyword id="KW-1185">Reference proteome</keyword>
<keyword id="KW-0804">Transcription</keyword>
<keyword id="KW-0805">Transcription regulation</keyword>
<protein>
    <recommendedName>
        <fullName evidence="1">Transcription elongation factor GreA</fullName>
    </recommendedName>
    <alternativeName>
        <fullName evidence="1">Transcript cleavage factor GreA</fullName>
    </alternativeName>
</protein>
<evidence type="ECO:0000255" key="1">
    <source>
        <dbReference type="HAMAP-Rule" id="MF_00105"/>
    </source>
</evidence>
<evidence type="ECO:0000256" key="2">
    <source>
        <dbReference type="SAM" id="MobiDB-lite"/>
    </source>
</evidence>
<comment type="function">
    <text evidence="1">Necessary for efficient RNA polymerase transcription elongation past template-encoded arresting sites. The arresting sites in DNA have the property of trapping a certain fraction of elongating RNA polymerases that pass through, resulting in locked ternary complexes. Cleavage of the nascent transcript by cleavage factors such as GreA or GreB allows the resumption of elongation from the new 3'terminus. GreA releases sequences of 2 to 3 nucleotides.</text>
</comment>
<comment type="similarity">
    <text evidence="1">Belongs to the GreA/GreB family.</text>
</comment>
<gene>
    <name evidence="1" type="primary">greA</name>
    <name type="ordered locus">LAF_1286</name>
</gene>